<feature type="chain" id="PRO_0000434306" description="Mu-theraphotoxin-Phlo2a">
    <location>
        <begin position="1"/>
        <end position="26" status="greater than"/>
    </location>
</feature>
<feature type="disulfide bond" evidence="1">
    <location>
        <begin position="2"/>
        <end position="16"/>
    </location>
</feature>
<feature type="disulfide bond" evidence="1">
    <location>
        <begin position="9"/>
        <end position="21"/>
    </location>
</feature>
<feature type="disulfide bond" evidence="1">
    <location>
        <begin position="15"/>
        <end position="25"/>
    </location>
</feature>
<feature type="non-terminal residue" evidence="3">
    <location>
        <position position="26"/>
    </location>
</feature>
<accession>P0DL59</accession>
<organism>
    <name type="scientific">Phlogius sp.</name>
    <name type="common">Tarantula spider</name>
    <dbReference type="NCBI Taxonomy" id="1690075"/>
    <lineage>
        <taxon>Eukaryota</taxon>
        <taxon>Metazoa</taxon>
        <taxon>Ecdysozoa</taxon>
        <taxon>Arthropoda</taxon>
        <taxon>Chelicerata</taxon>
        <taxon>Arachnida</taxon>
        <taxon>Araneae</taxon>
        <taxon>Mygalomorphae</taxon>
        <taxon>Theraphosidae</taxon>
        <taxon>Phlogius</taxon>
    </lineage>
</organism>
<name>PM2A_PHLSP</name>
<keyword id="KW-0123">Cardiotoxin</keyword>
<keyword id="KW-0903">Direct protein sequencing</keyword>
<keyword id="KW-1015">Disulfide bond</keyword>
<keyword id="KW-0872">Ion channel impairing toxin</keyword>
<keyword id="KW-0528">Neurotoxin</keyword>
<keyword id="KW-0964">Secreted</keyword>
<keyword id="KW-0800">Toxin</keyword>
<keyword id="KW-0738">Voltage-gated sodium channel impairing toxin</keyword>
<protein>
    <recommendedName>
        <fullName evidence="3">Mu-theraphotoxin-Phlo2a</fullName>
        <shortName evidence="3">Mu-TRTX-Phlo2a</shortName>
    </recommendedName>
</protein>
<evidence type="ECO:0000250" key="1">
    <source>
        <dbReference type="UniProtKB" id="P60273"/>
    </source>
</evidence>
<evidence type="ECO:0000269" key="2">
    <source>
    </source>
</evidence>
<evidence type="ECO:0000303" key="3">
    <source>
    </source>
</evidence>
<evidence type="ECO:0000305" key="4"/>
<evidence type="ECO:0000305" key="5">
    <source>
    </source>
</evidence>
<dbReference type="SMR" id="P0DL59"/>
<dbReference type="GO" id="GO:0005576">
    <property type="term" value="C:extracellular region"/>
    <property type="evidence" value="ECO:0007669"/>
    <property type="project" value="UniProtKB-SubCell"/>
</dbReference>
<dbReference type="GO" id="GO:0017080">
    <property type="term" value="F:sodium channel regulator activity"/>
    <property type="evidence" value="ECO:0007669"/>
    <property type="project" value="UniProtKB-KW"/>
</dbReference>
<dbReference type="GO" id="GO:0090729">
    <property type="term" value="F:toxin activity"/>
    <property type="evidence" value="ECO:0007669"/>
    <property type="project" value="UniProtKB-KW"/>
</dbReference>
<dbReference type="SUPFAM" id="SSF57059">
    <property type="entry name" value="omega toxin-like"/>
    <property type="match status" value="1"/>
</dbReference>
<comment type="function">
    <text evidence="2">Gating-modifier toxin that non-selectively inhibits voltage-gated sodium channel Nav by shifting the threshold for channel activation to more positive potentials. This toxin moderately inhibits human Nav1.2/SCN2A (IC(50)=404 nM), Nav1.5/SCN5A (IC(50)=218 nM) and Nav1.7/SCN9A (IC(50)=333 nM). Inhibition of Nav1.7 is voltage-dependent, with lower inhibition at more positive test pulses.</text>
</comment>
<comment type="subcellular location">
    <subcellularLocation>
        <location evidence="2">Secreted</location>
    </subcellularLocation>
</comment>
<comment type="tissue specificity">
    <text evidence="5">Expressed by the venom gland.</text>
</comment>
<comment type="domain">
    <text evidence="5">The presence of a 'disulfide through disulfide knot' structurally defines this protein as a knottin.</text>
</comment>
<comment type="mass spectrometry">
    <text>Monoisotopic mass.</text>
</comment>
<comment type="similarity">
    <text evidence="4">Belongs to the neurotoxin 30 (phrixotoxin) family.</text>
</comment>
<proteinExistence type="evidence at protein level"/>
<sequence>SCQKWMWLCDEERKCCEDMVCKLWCK</sequence>
<reference key="1">
    <citation type="journal article" date="2015" name="Toxins">
        <title>Three peptide modulators of the human voltage-gated sodium channel 1.7, an important analgesic target, from the venom of an Australian tarantula.</title>
        <authorList>
            <person name="Chow C.Y."/>
            <person name="Cristofori-Armstrong B."/>
            <person name="Undheim E.A."/>
            <person name="King G.F."/>
            <person name="Rash L.D."/>
        </authorList>
    </citation>
    <scope>PROTEIN SEQUENCE</scope>
    <scope>FUNCTION</scope>
    <scope>MASS SPECTROMETRY</scope>
    <scope>SUBCELLULAR LOCATION</scope>
    <source>
        <tissue>Venom</tissue>
        <tissue>Venom gland</tissue>
    </source>
</reference>